<sequence>MIEVTLLGTGSPIPDARRAGPSTLVRAGGQTFLVDCGRGVLQRAAAVGVGANQISALLLTHLHSDHIADLGDVLITRWVSNFAPDLPPLPIIGPPGTAEVVENMLKAFSFDIGYRIAHHDDLTTPPPVEVEEVTDGVVWGRDEVSIRVGPTDHRPVTPTIGFRIEHHGASVVLAGDTVPCRGLDKLAAGAGALVHTVIRRDLIEALPMQRIRDICDYHSSVEQAAETATRAGVGILILTHYVPTLQPGQEDDWRALAATRFDRQIEIGDDLHRVQVHPGVCAKPAG</sequence>
<accession>A4T2G4</accession>
<feature type="chain" id="PRO_1000088338" description="Ribonuclease Z">
    <location>
        <begin position="1"/>
        <end position="286"/>
    </location>
</feature>
<feature type="active site" description="Proton acceptor" evidence="1">
    <location>
        <position position="65"/>
    </location>
</feature>
<feature type="binding site" evidence="1">
    <location>
        <position position="61"/>
    </location>
    <ligand>
        <name>Zn(2+)</name>
        <dbReference type="ChEBI" id="CHEBI:29105"/>
        <label>1</label>
        <note>catalytic</note>
    </ligand>
</feature>
<feature type="binding site" evidence="1">
    <location>
        <position position="63"/>
    </location>
    <ligand>
        <name>Zn(2+)</name>
        <dbReference type="ChEBI" id="CHEBI:29105"/>
        <label>1</label>
        <note>catalytic</note>
    </ligand>
</feature>
<feature type="binding site" evidence="1">
    <location>
        <position position="65"/>
    </location>
    <ligand>
        <name>Zn(2+)</name>
        <dbReference type="ChEBI" id="CHEBI:29105"/>
        <label>2</label>
        <note>catalytic</note>
    </ligand>
</feature>
<feature type="binding site" evidence="1">
    <location>
        <position position="66"/>
    </location>
    <ligand>
        <name>Zn(2+)</name>
        <dbReference type="ChEBI" id="CHEBI:29105"/>
        <label>2</label>
        <note>catalytic</note>
    </ligand>
</feature>
<feature type="binding site" evidence="1">
    <location>
        <position position="153"/>
    </location>
    <ligand>
        <name>Zn(2+)</name>
        <dbReference type="ChEBI" id="CHEBI:29105"/>
        <label>1</label>
        <note>catalytic</note>
    </ligand>
</feature>
<feature type="binding site" evidence="1">
    <location>
        <position position="176"/>
    </location>
    <ligand>
        <name>Zn(2+)</name>
        <dbReference type="ChEBI" id="CHEBI:29105"/>
        <label>1</label>
        <note>catalytic</note>
    </ligand>
</feature>
<feature type="binding site" evidence="1">
    <location>
        <position position="176"/>
    </location>
    <ligand>
        <name>Zn(2+)</name>
        <dbReference type="ChEBI" id="CHEBI:29105"/>
        <label>2</label>
        <note>catalytic</note>
    </ligand>
</feature>
<feature type="binding site" evidence="1">
    <location>
        <position position="240"/>
    </location>
    <ligand>
        <name>Zn(2+)</name>
        <dbReference type="ChEBI" id="CHEBI:29105"/>
        <label>2</label>
        <note>catalytic</note>
    </ligand>
</feature>
<evidence type="ECO:0000255" key="1">
    <source>
        <dbReference type="HAMAP-Rule" id="MF_01818"/>
    </source>
</evidence>
<proteinExistence type="inferred from homology"/>
<protein>
    <recommendedName>
        <fullName evidence="1">Ribonuclease Z</fullName>
        <shortName evidence="1">RNase Z</shortName>
        <ecNumber evidence="1">3.1.26.11</ecNumber>
    </recommendedName>
    <alternativeName>
        <fullName evidence="1">tRNA 3 endonuclease</fullName>
    </alternativeName>
    <alternativeName>
        <fullName evidence="1">tRNase Z</fullName>
    </alternativeName>
</protein>
<dbReference type="EC" id="3.1.26.11" evidence="1"/>
<dbReference type="EMBL" id="CP000656">
    <property type="protein sequence ID" value="ABP45146.1"/>
    <property type="molecule type" value="Genomic_DNA"/>
</dbReference>
<dbReference type="SMR" id="A4T2G4"/>
<dbReference type="STRING" id="350054.Mflv_2669"/>
<dbReference type="KEGG" id="mgi:Mflv_2669"/>
<dbReference type="eggNOG" id="COG1234">
    <property type="taxonomic scope" value="Bacteria"/>
</dbReference>
<dbReference type="HOGENOM" id="CLU_031317_0_0_11"/>
<dbReference type="OrthoDB" id="4137979at2"/>
<dbReference type="GO" id="GO:0042781">
    <property type="term" value="F:3'-tRNA processing endoribonuclease activity"/>
    <property type="evidence" value="ECO:0007669"/>
    <property type="project" value="UniProtKB-UniRule"/>
</dbReference>
<dbReference type="GO" id="GO:0046872">
    <property type="term" value="F:metal ion binding"/>
    <property type="evidence" value="ECO:0007669"/>
    <property type="project" value="UniProtKB-KW"/>
</dbReference>
<dbReference type="CDD" id="cd07719">
    <property type="entry name" value="arylsulfatase_AtsA-like_MBL-fold"/>
    <property type="match status" value="1"/>
</dbReference>
<dbReference type="Gene3D" id="3.60.15.10">
    <property type="entry name" value="Ribonuclease Z/Hydroxyacylglutathione hydrolase-like"/>
    <property type="match status" value="1"/>
</dbReference>
<dbReference type="HAMAP" id="MF_01818">
    <property type="entry name" value="RNase_Z_BN"/>
    <property type="match status" value="1"/>
</dbReference>
<dbReference type="InterPro" id="IPR044094">
    <property type="entry name" value="AtsA-like_MBL-fold"/>
</dbReference>
<dbReference type="InterPro" id="IPR001279">
    <property type="entry name" value="Metallo-B-lactamas"/>
</dbReference>
<dbReference type="InterPro" id="IPR036866">
    <property type="entry name" value="RibonucZ/Hydroxyglut_hydro"/>
</dbReference>
<dbReference type="InterPro" id="IPR013471">
    <property type="entry name" value="RNase_Z/BN"/>
</dbReference>
<dbReference type="NCBIfam" id="NF000806">
    <property type="entry name" value="PRK00055.2-4"/>
    <property type="match status" value="1"/>
</dbReference>
<dbReference type="PANTHER" id="PTHR46018">
    <property type="entry name" value="ZINC PHOSPHODIESTERASE ELAC PROTEIN 1"/>
    <property type="match status" value="1"/>
</dbReference>
<dbReference type="PANTHER" id="PTHR46018:SF2">
    <property type="entry name" value="ZINC PHOSPHODIESTERASE ELAC PROTEIN 1"/>
    <property type="match status" value="1"/>
</dbReference>
<dbReference type="Pfam" id="PF12706">
    <property type="entry name" value="Lactamase_B_2"/>
    <property type="match status" value="1"/>
</dbReference>
<dbReference type="SMART" id="SM00849">
    <property type="entry name" value="Lactamase_B"/>
    <property type="match status" value="1"/>
</dbReference>
<dbReference type="SUPFAM" id="SSF56281">
    <property type="entry name" value="Metallo-hydrolase/oxidoreductase"/>
    <property type="match status" value="1"/>
</dbReference>
<organism>
    <name type="scientific">Mycolicibacterium gilvum (strain PYR-GCK)</name>
    <name type="common">Mycobacterium gilvum (strain PYR-GCK)</name>
    <dbReference type="NCBI Taxonomy" id="350054"/>
    <lineage>
        <taxon>Bacteria</taxon>
        <taxon>Bacillati</taxon>
        <taxon>Actinomycetota</taxon>
        <taxon>Actinomycetes</taxon>
        <taxon>Mycobacteriales</taxon>
        <taxon>Mycobacteriaceae</taxon>
        <taxon>Mycolicibacterium</taxon>
    </lineage>
</organism>
<keyword id="KW-0255">Endonuclease</keyword>
<keyword id="KW-0378">Hydrolase</keyword>
<keyword id="KW-0479">Metal-binding</keyword>
<keyword id="KW-0540">Nuclease</keyword>
<keyword id="KW-0819">tRNA processing</keyword>
<keyword id="KW-0862">Zinc</keyword>
<comment type="function">
    <text evidence="1">Zinc phosphodiesterase, which displays some tRNA 3'-processing endonuclease activity. Probably involved in tRNA maturation, by removing a 3'-trailer from precursor tRNA.</text>
</comment>
<comment type="catalytic activity">
    <reaction evidence="1">
        <text>Endonucleolytic cleavage of RNA, removing extra 3' nucleotides from tRNA precursor, generating 3' termini of tRNAs. A 3'-hydroxy group is left at the tRNA terminus and a 5'-phosphoryl group is left at the trailer molecule.</text>
        <dbReference type="EC" id="3.1.26.11"/>
    </reaction>
</comment>
<comment type="cofactor">
    <cofactor evidence="1">
        <name>Zn(2+)</name>
        <dbReference type="ChEBI" id="CHEBI:29105"/>
    </cofactor>
    <text evidence="1">Binds 2 Zn(2+) ions.</text>
</comment>
<comment type="subunit">
    <text evidence="1">Homodimer.</text>
</comment>
<comment type="similarity">
    <text evidence="1">Belongs to the RNase Z family.</text>
</comment>
<reference key="1">
    <citation type="submission" date="2007-04" db="EMBL/GenBank/DDBJ databases">
        <title>Complete sequence of chromosome of Mycobacterium gilvum PYR-GCK.</title>
        <authorList>
            <consortium name="US DOE Joint Genome Institute"/>
            <person name="Copeland A."/>
            <person name="Lucas S."/>
            <person name="Lapidus A."/>
            <person name="Barry K."/>
            <person name="Detter J.C."/>
            <person name="Glavina del Rio T."/>
            <person name="Hammon N."/>
            <person name="Israni S."/>
            <person name="Dalin E."/>
            <person name="Tice H."/>
            <person name="Pitluck S."/>
            <person name="Chain P."/>
            <person name="Malfatti S."/>
            <person name="Shin M."/>
            <person name="Vergez L."/>
            <person name="Schmutz J."/>
            <person name="Larimer F."/>
            <person name="Land M."/>
            <person name="Hauser L."/>
            <person name="Kyrpides N."/>
            <person name="Mikhailova N."/>
            <person name="Miller C."/>
            <person name="Richardson P."/>
        </authorList>
    </citation>
    <scope>NUCLEOTIDE SEQUENCE [LARGE SCALE GENOMIC DNA]</scope>
    <source>
        <strain>PYR-GCK</strain>
    </source>
</reference>
<name>RNZ_MYCGI</name>
<gene>
    <name evidence="1" type="primary">rnz</name>
    <name type="ordered locus">Mflv_2669</name>
</gene>